<accession>Q5R886</accession>
<protein>
    <recommendedName>
        <fullName evidence="2">Transcription initiation factor IIB</fullName>
        <ecNumber evidence="2">2.3.1.48</ecNumber>
    </recommendedName>
    <alternativeName>
        <fullName evidence="2">General transcription factor TFIIB</fullName>
    </alternativeName>
</protein>
<proteinExistence type="evidence at transcript level"/>
<keyword id="KW-0007">Acetylation</keyword>
<keyword id="KW-0012">Acyltransferase</keyword>
<keyword id="KW-0158">Chromosome</keyword>
<keyword id="KW-0238">DNA-binding</keyword>
<keyword id="KW-0479">Metal-binding</keyword>
<keyword id="KW-0539">Nucleus</keyword>
<keyword id="KW-0597">Phosphoprotein</keyword>
<keyword id="KW-1185">Reference proteome</keyword>
<keyword id="KW-0677">Repeat</keyword>
<keyword id="KW-0804">Transcription</keyword>
<keyword id="KW-0805">Transcription regulation</keyword>
<keyword id="KW-0808">Transferase</keyword>
<keyword id="KW-0862">Zinc</keyword>
<keyword id="KW-0863">Zinc-finger</keyword>
<comment type="function">
    <text evidence="2">General transcription factor that plays a role in transcription initiation by RNA polymerase II (Pol II). Involved in the pre-initiation complex (PIC) formation and Pol II recruitment at promoter DNA. Together with the TATA box-bound TBP forms the core initiation complex and provides a bridge between TBP and the Pol II-TFIIF complex. Released from the PIC early following the onset of transcription during the initiation and elongation transition and reassociates with TBP during the next transcription cycle. Associates with chromatin to core promoter-specific regions. Binds to two distinct DNA core promoter consensus sequence elements in a TBP-independent manner; these IIB-recognition elements (BREs) are localized immediately upstream (BREu), 5'-[GC][GC][GA]CGCC-3', and downstream (BREd), 5'-[GA]T[TGA][TG][GT][TG][TG]-3', of the TATA box element. Modulates transcription start site selection. Also exhibits autoacetyltransferase activity that contributes to the activated transcription.</text>
</comment>
<comment type="catalytic activity">
    <reaction evidence="2">
        <text>L-lysyl-[protein] + acetyl-CoA = N(6)-acetyl-L-lysyl-[protein] + CoA + H(+)</text>
        <dbReference type="Rhea" id="RHEA:45948"/>
        <dbReference type="Rhea" id="RHEA-COMP:9752"/>
        <dbReference type="Rhea" id="RHEA-COMP:10731"/>
        <dbReference type="ChEBI" id="CHEBI:15378"/>
        <dbReference type="ChEBI" id="CHEBI:29969"/>
        <dbReference type="ChEBI" id="CHEBI:57287"/>
        <dbReference type="ChEBI" id="CHEBI:57288"/>
        <dbReference type="ChEBI" id="CHEBI:61930"/>
        <dbReference type="EC" id="2.3.1.48"/>
    </reaction>
</comment>
<comment type="subunit">
    <text evidence="1 2">Found in a ternary complex with TATA box-bound TBP. Part of a TFIID-containing RNA polymerase II pre-initiation complex (PIC) that is composed of TBP and at least GTF2A1, GTF2A2, GTF2E1, GTF2E2, GTF2F1, GTF2H2, GTF2H3, GTF2H4, GTF2H5, GTF2B, TCEA1, ERCC2, ERCC3, TAF1, TAF2, TAF3, TAF4, TAF5, TAF6, TAF7, TAF8, TAF9, TAF10, TAF11, TAF12 and TAF13. Associates with TFIID-TFIIA (DA complex) to form TFIID-TFIIA-TFIIB (DAB complex), which is then recognized by RNA polymerase II (Pol II). Found in a RNA polymerase II initiation complex. Interacts (via C-terminus) with TBP; this interaction with TATA box-bound TBP guides Pol II into the PIC. Interacts (via N-terminus) with Pol II. Interacts (via C-terminus) with SSU72; this interaction is inhibited by SYMPK. Interacts with NR2F1; this interaction is direct. Interacts with PGR. Interacts with ESR1. Interacts with GTF2F1 (via C-terminus and preferentially via acetylated form); this interaction prevents binding of GTF2B to GTF2F2. Interacts with GTF2F2 (via N-terminus); this interaction is inhibited in presence of GTF2F1. Interacts with the transcription elongation factor TCEA2. Interacts with HSF1 (via transactivation domain) (By similarity). Interacts with GPBP1 (By similarity).</text>
</comment>
<comment type="subcellular location">
    <subcellularLocation>
        <location evidence="2">Nucleus</location>
    </subcellularLocation>
    <subcellularLocation>
        <location evidence="2">Chromosome</location>
    </subcellularLocation>
    <text evidence="2">Non-acetylated form colocalizes with DNA in the G0/1, S and G2 phases of the cell cycle, but not during mitosis. Acetylated form colocalizes at transcriptionally silent mitotic chromatids during mitosis at metaphase, anaphase, and telophase phases of the cell cycle.</text>
</comment>
<comment type="domain">
    <text evidence="2">The TFIIB-type zinc-binding domain is necessary for the interaction and recruitment of RNA polymerase II to the core promoter, the formation of a fully competent pre-initiation complex (PIC) assembly and basal transcription initiation. The C-terminus is necessary and sufficient for interaction with the TATA box-bound TBP complex and for the formation of PIC.</text>
</comment>
<comment type="PTM">
    <text evidence="2">Acetylated. Autoacetylated; autoacetylation at Lys-238 stimulates transcription activation.</text>
</comment>
<comment type="similarity">
    <text evidence="4">Belongs to the TFIIB family.</text>
</comment>
<sequence length="316" mass="34833">MASTSRLDALPRVTCPNHPDAILVEDYRAGDMICPECGLVVGDRVIDVGSEWRTFSNDKATKDPSRVGDSQNPLLSDGDLSTMIGKGTGAASFDEFGNSKYQNRRTMSSSDRAMMNAFKEITTMADRINLPRNIVDRTNNLFKQVYEQKSLKGRANDAIASACLYIACRQEGVPRTFKEICAVSRISKKEIGRCFKLILKALETSVDLITTGDFMSRFCSNLCLPKQVQMAATHIARKAVELDLVPGRSPISVAAAAIYMASQASAEKRTQKEIGDIAGVADVTIRQSYRLIYPRAPDLFPTDFKFDTPVDKLPQL</sequence>
<evidence type="ECO:0000250" key="1">
    <source>
        <dbReference type="UniProtKB" id="P62915"/>
    </source>
</evidence>
<evidence type="ECO:0000250" key="2">
    <source>
        <dbReference type="UniProtKB" id="Q00403"/>
    </source>
</evidence>
<evidence type="ECO:0000255" key="3">
    <source>
        <dbReference type="PROSITE-ProRule" id="PRU00469"/>
    </source>
</evidence>
<evidence type="ECO:0000305" key="4"/>
<feature type="chain" id="PRO_0000119295" description="Transcription initiation factor IIB">
    <location>
        <begin position="1"/>
        <end position="316"/>
    </location>
</feature>
<feature type="repeat" description="1">
    <location>
        <begin position="124"/>
        <end position="200"/>
    </location>
</feature>
<feature type="repeat" description="2">
    <location>
        <begin position="218"/>
        <end position="294"/>
    </location>
</feature>
<feature type="zinc finger region" description="TFIIB-type" evidence="3">
    <location>
        <begin position="11"/>
        <end position="42"/>
    </location>
</feature>
<feature type="region of interest" description="Core promoter DNA-binding" evidence="2">
    <location>
        <begin position="189"/>
        <end position="193"/>
    </location>
</feature>
<feature type="region of interest" description="Necessary for TATA box-bound complex TBP formation" evidence="2">
    <location>
        <begin position="244"/>
        <end position="316"/>
    </location>
</feature>
<feature type="region of interest" description="Core promoter DNA-binding" evidence="2">
    <location>
        <begin position="249"/>
        <end position="252"/>
    </location>
</feature>
<feature type="region of interest" description="Core promoter DNA-binding" evidence="2">
    <location>
        <begin position="283"/>
        <end position="286"/>
    </location>
</feature>
<feature type="binding site" evidence="3">
    <location>
        <position position="15"/>
    </location>
    <ligand>
        <name>Zn(2+)</name>
        <dbReference type="ChEBI" id="CHEBI:29105"/>
    </ligand>
</feature>
<feature type="binding site" evidence="3">
    <location>
        <position position="18"/>
    </location>
    <ligand>
        <name>Zn(2+)</name>
        <dbReference type="ChEBI" id="CHEBI:29105"/>
    </ligand>
</feature>
<feature type="binding site" evidence="3">
    <location>
        <position position="34"/>
    </location>
    <ligand>
        <name>Zn(2+)</name>
        <dbReference type="ChEBI" id="CHEBI:29105"/>
    </ligand>
</feature>
<feature type="binding site" evidence="3">
    <location>
        <position position="37"/>
    </location>
    <ligand>
        <name>Zn(2+)</name>
        <dbReference type="ChEBI" id="CHEBI:29105"/>
    </ligand>
</feature>
<feature type="binding site" evidence="2">
    <location>
        <position position="152"/>
    </location>
    <ligand>
        <name>DNA</name>
        <dbReference type="ChEBI" id="CHEBI:16991"/>
    </ligand>
</feature>
<feature type="binding site" evidence="2">
    <location>
        <position position="154"/>
    </location>
    <ligand>
        <name>DNA</name>
        <dbReference type="ChEBI" id="CHEBI:16991"/>
    </ligand>
</feature>
<feature type="binding site" evidence="2">
    <location>
        <position position="189"/>
    </location>
    <ligand>
        <name>DNA</name>
        <dbReference type="ChEBI" id="CHEBI:16991"/>
    </ligand>
</feature>
<feature type="binding site" evidence="2">
    <location>
        <position position="196"/>
    </location>
    <ligand>
        <name>DNA</name>
        <dbReference type="ChEBI" id="CHEBI:16991"/>
    </ligand>
</feature>
<feature type="binding site" evidence="2">
    <location>
        <position position="248"/>
    </location>
    <ligand>
        <name>DNA</name>
        <dbReference type="ChEBI" id="CHEBI:16991"/>
    </ligand>
</feature>
<feature type="binding site" evidence="2">
    <location>
        <position position="272"/>
    </location>
    <ligand>
        <name>DNA</name>
        <dbReference type="ChEBI" id="CHEBI:16991"/>
    </ligand>
</feature>
<feature type="binding site" evidence="2">
    <location>
        <position position="281"/>
    </location>
    <ligand>
        <name>DNA</name>
        <dbReference type="ChEBI" id="CHEBI:16991"/>
    </ligand>
</feature>
<feature type="binding site" evidence="2">
    <location>
        <position position="284"/>
    </location>
    <ligand>
        <name>DNA</name>
        <dbReference type="ChEBI" id="CHEBI:16991"/>
    </ligand>
</feature>
<feature type="binding site" evidence="2">
    <location>
        <position position="286"/>
    </location>
    <ligand>
        <name>DNA</name>
        <dbReference type="ChEBI" id="CHEBI:16991"/>
    </ligand>
</feature>
<feature type="binding site" evidence="2">
    <location>
        <position position="290"/>
    </location>
    <ligand>
        <name>DNA</name>
        <dbReference type="ChEBI" id="CHEBI:16991"/>
    </ligand>
</feature>
<feature type="modified residue" description="Phosphoserine" evidence="2">
    <location>
        <position position="70"/>
    </location>
</feature>
<feature type="modified residue" description="Phosphoserine" evidence="2">
    <location>
        <position position="76"/>
    </location>
</feature>
<feature type="modified residue" description="Phosphoserine" evidence="2">
    <location>
        <position position="92"/>
    </location>
</feature>
<feature type="modified residue" description="N6-acetyllysine; by autocatalysis" evidence="2">
    <location>
        <position position="238"/>
    </location>
</feature>
<organism>
    <name type="scientific">Pongo abelii</name>
    <name type="common">Sumatran orangutan</name>
    <name type="synonym">Pongo pygmaeus abelii</name>
    <dbReference type="NCBI Taxonomy" id="9601"/>
    <lineage>
        <taxon>Eukaryota</taxon>
        <taxon>Metazoa</taxon>
        <taxon>Chordata</taxon>
        <taxon>Craniata</taxon>
        <taxon>Vertebrata</taxon>
        <taxon>Euteleostomi</taxon>
        <taxon>Mammalia</taxon>
        <taxon>Eutheria</taxon>
        <taxon>Euarchontoglires</taxon>
        <taxon>Primates</taxon>
        <taxon>Haplorrhini</taxon>
        <taxon>Catarrhini</taxon>
        <taxon>Hominidae</taxon>
        <taxon>Pongo</taxon>
    </lineage>
</organism>
<name>TF2B_PONAB</name>
<dbReference type="EC" id="2.3.1.48" evidence="2"/>
<dbReference type="EMBL" id="CR859868">
    <property type="protein sequence ID" value="CAH92024.1"/>
    <property type="molecule type" value="mRNA"/>
</dbReference>
<dbReference type="RefSeq" id="NP_001126175.1">
    <property type="nucleotide sequence ID" value="NM_001132703.1"/>
</dbReference>
<dbReference type="SMR" id="Q5R886"/>
<dbReference type="FunCoup" id="Q5R886">
    <property type="interactions" value="2380"/>
</dbReference>
<dbReference type="STRING" id="9601.ENSPPYP00000001365"/>
<dbReference type="Ensembl" id="ENSPPYT00000001410.3">
    <property type="protein sequence ID" value="ENSPPYP00000001365.3"/>
    <property type="gene ID" value="ENSPPYG00000001178.3"/>
</dbReference>
<dbReference type="GeneID" id="100173138"/>
<dbReference type="KEGG" id="pon:100173138"/>
<dbReference type="CTD" id="2959"/>
<dbReference type="eggNOG" id="KOG1597">
    <property type="taxonomic scope" value="Eukaryota"/>
</dbReference>
<dbReference type="GeneTree" id="ENSGT00390000006671"/>
<dbReference type="HOGENOM" id="CLU_043736_1_1_1"/>
<dbReference type="InParanoid" id="Q5R886"/>
<dbReference type="OMA" id="DHDQRMK"/>
<dbReference type="OrthoDB" id="25790at2759"/>
<dbReference type="Proteomes" id="UP000001595">
    <property type="component" value="Chromosome 1"/>
</dbReference>
<dbReference type="GO" id="GO:0032153">
    <property type="term" value="C:cell division site"/>
    <property type="evidence" value="ECO:0007669"/>
    <property type="project" value="Ensembl"/>
</dbReference>
<dbReference type="GO" id="GO:0005694">
    <property type="term" value="C:chromosome"/>
    <property type="evidence" value="ECO:0000250"/>
    <property type="project" value="UniProtKB"/>
</dbReference>
<dbReference type="GO" id="GO:0042585">
    <property type="term" value="C:germinal vesicle"/>
    <property type="evidence" value="ECO:0007669"/>
    <property type="project" value="Ensembl"/>
</dbReference>
<dbReference type="GO" id="GO:0000776">
    <property type="term" value="C:kinetochore"/>
    <property type="evidence" value="ECO:0007669"/>
    <property type="project" value="Ensembl"/>
</dbReference>
<dbReference type="GO" id="GO:0016604">
    <property type="term" value="C:nuclear body"/>
    <property type="evidence" value="ECO:0007669"/>
    <property type="project" value="Ensembl"/>
</dbReference>
<dbReference type="GO" id="GO:0005634">
    <property type="term" value="C:nucleus"/>
    <property type="evidence" value="ECO:0000250"/>
    <property type="project" value="UniProtKB"/>
</dbReference>
<dbReference type="GO" id="GO:0032993">
    <property type="term" value="C:protein-DNA complex"/>
    <property type="evidence" value="ECO:0000250"/>
    <property type="project" value="UniProtKB"/>
</dbReference>
<dbReference type="GO" id="GO:0005669">
    <property type="term" value="C:transcription factor TFIID complex"/>
    <property type="evidence" value="ECO:0007669"/>
    <property type="project" value="Ensembl"/>
</dbReference>
<dbReference type="GO" id="GO:0097550">
    <property type="term" value="C:transcription preinitiation complex"/>
    <property type="evidence" value="ECO:0007669"/>
    <property type="project" value="TreeGrafter"/>
</dbReference>
<dbReference type="GO" id="GO:0016407">
    <property type="term" value="F:acetyltransferase activity"/>
    <property type="evidence" value="ECO:0000250"/>
    <property type="project" value="UniProtKB"/>
</dbReference>
<dbReference type="GO" id="GO:0004402">
    <property type="term" value="F:histone acetyltransferase activity"/>
    <property type="evidence" value="ECO:0007669"/>
    <property type="project" value="UniProtKB-EC"/>
</dbReference>
<dbReference type="GO" id="GO:0046966">
    <property type="term" value="F:nuclear thyroid hormone receptor binding"/>
    <property type="evidence" value="ECO:0007669"/>
    <property type="project" value="Ensembl"/>
</dbReference>
<dbReference type="GO" id="GO:1990841">
    <property type="term" value="F:promoter-specific chromatin binding"/>
    <property type="evidence" value="ECO:0000250"/>
    <property type="project" value="UniProtKB"/>
</dbReference>
<dbReference type="GO" id="GO:0000993">
    <property type="term" value="F:RNA polymerase II complex binding"/>
    <property type="evidence" value="ECO:0000250"/>
    <property type="project" value="UniProtKB"/>
</dbReference>
<dbReference type="GO" id="GO:0000979">
    <property type="term" value="F:RNA polymerase II core promoter sequence-specific DNA binding"/>
    <property type="evidence" value="ECO:0000250"/>
    <property type="project" value="UniProtKB"/>
</dbReference>
<dbReference type="GO" id="GO:0016251">
    <property type="term" value="F:RNA polymerase II general transcription initiation factor activity"/>
    <property type="evidence" value="ECO:0007669"/>
    <property type="project" value="Ensembl"/>
</dbReference>
<dbReference type="GO" id="GO:0017025">
    <property type="term" value="F:TBP-class protein binding"/>
    <property type="evidence" value="ECO:0007669"/>
    <property type="project" value="Ensembl"/>
</dbReference>
<dbReference type="GO" id="GO:0008270">
    <property type="term" value="F:zinc ion binding"/>
    <property type="evidence" value="ECO:0000250"/>
    <property type="project" value="UniProtKB"/>
</dbReference>
<dbReference type="GO" id="GO:0051177">
    <property type="term" value="P:meiotic sister chromatid cohesion"/>
    <property type="evidence" value="ECO:0007669"/>
    <property type="project" value="Ensembl"/>
</dbReference>
<dbReference type="GO" id="GO:0006473">
    <property type="term" value="P:protein acetylation"/>
    <property type="evidence" value="ECO:0000250"/>
    <property type="project" value="UniProtKB"/>
</dbReference>
<dbReference type="GO" id="GO:1990114">
    <property type="term" value="P:RNA polymerase II core complex assembly"/>
    <property type="evidence" value="ECO:0000250"/>
    <property type="project" value="UniProtKB"/>
</dbReference>
<dbReference type="GO" id="GO:0051123">
    <property type="term" value="P:RNA polymerase II preinitiation complex assembly"/>
    <property type="evidence" value="ECO:0000250"/>
    <property type="project" value="UniProtKB"/>
</dbReference>
<dbReference type="GO" id="GO:0051225">
    <property type="term" value="P:spindle assembly"/>
    <property type="evidence" value="ECO:0007669"/>
    <property type="project" value="Ensembl"/>
</dbReference>
<dbReference type="GO" id="GO:0006366">
    <property type="term" value="P:transcription by RNA polymerase II"/>
    <property type="evidence" value="ECO:0000250"/>
    <property type="project" value="UniProtKB"/>
</dbReference>
<dbReference type="GO" id="GO:0006367">
    <property type="term" value="P:transcription initiation at RNA polymerase II promoter"/>
    <property type="evidence" value="ECO:0000250"/>
    <property type="project" value="UniProtKB"/>
</dbReference>
<dbReference type="GO" id="GO:0001174">
    <property type="term" value="P:transcriptional start site selection at RNA polymerase II promoter"/>
    <property type="evidence" value="ECO:0000250"/>
    <property type="project" value="UniProtKB"/>
</dbReference>
<dbReference type="GO" id="GO:0019083">
    <property type="term" value="P:viral transcription"/>
    <property type="evidence" value="ECO:0000250"/>
    <property type="project" value="UniProtKB"/>
</dbReference>
<dbReference type="CDD" id="cd20551">
    <property type="entry name" value="CYCLIN_TFIIB_rpt1"/>
    <property type="match status" value="1"/>
</dbReference>
<dbReference type="CDD" id="cd20552">
    <property type="entry name" value="CYCLIN_TFIIB_rpt2"/>
    <property type="match status" value="1"/>
</dbReference>
<dbReference type="FunFam" id="1.10.472.10:FF:000008">
    <property type="entry name" value="Transcription initiation factor IIB"/>
    <property type="match status" value="1"/>
</dbReference>
<dbReference type="FunFam" id="1.10.472.170:FF:000003">
    <property type="entry name" value="Transcription initiation factor IIB"/>
    <property type="match status" value="1"/>
</dbReference>
<dbReference type="FunFam" id="2.20.25.10:FF:000007">
    <property type="entry name" value="Transcription initiation factor IIB"/>
    <property type="match status" value="1"/>
</dbReference>
<dbReference type="FunFam" id="1.10.472.10:FF:000019">
    <property type="entry name" value="transcription initiation factor IIB"/>
    <property type="match status" value="1"/>
</dbReference>
<dbReference type="Gene3D" id="2.20.25.10">
    <property type="match status" value="1"/>
</dbReference>
<dbReference type="Gene3D" id="1.10.472.10">
    <property type="entry name" value="Cyclin-like"/>
    <property type="match status" value="2"/>
</dbReference>
<dbReference type="InterPro" id="IPR013763">
    <property type="entry name" value="Cyclin-like_dom"/>
</dbReference>
<dbReference type="InterPro" id="IPR036915">
    <property type="entry name" value="Cyclin-like_sf"/>
</dbReference>
<dbReference type="InterPro" id="IPR000812">
    <property type="entry name" value="TFIIB"/>
</dbReference>
<dbReference type="InterPro" id="IPR023486">
    <property type="entry name" value="TFIIB_CS"/>
</dbReference>
<dbReference type="InterPro" id="IPR013150">
    <property type="entry name" value="TFIIB_cyclin"/>
</dbReference>
<dbReference type="InterPro" id="IPR013137">
    <property type="entry name" value="Znf_TFIIB"/>
</dbReference>
<dbReference type="PANTHER" id="PTHR11618:SF77">
    <property type="entry name" value="TRANSCRIPTION INITIATION FACTOR IIB"/>
    <property type="match status" value="1"/>
</dbReference>
<dbReference type="PANTHER" id="PTHR11618">
    <property type="entry name" value="TRANSCRIPTION INITIATION FACTOR IIB-RELATED"/>
    <property type="match status" value="1"/>
</dbReference>
<dbReference type="Pfam" id="PF00382">
    <property type="entry name" value="TFIIB"/>
    <property type="match status" value="2"/>
</dbReference>
<dbReference type="Pfam" id="PF08271">
    <property type="entry name" value="Zn_Ribbon_TF"/>
    <property type="match status" value="1"/>
</dbReference>
<dbReference type="PRINTS" id="PR00685">
    <property type="entry name" value="TIFACTORIIB"/>
</dbReference>
<dbReference type="SMART" id="SM00385">
    <property type="entry name" value="CYCLIN"/>
    <property type="match status" value="2"/>
</dbReference>
<dbReference type="SUPFAM" id="SSF47954">
    <property type="entry name" value="Cyclin-like"/>
    <property type="match status" value="2"/>
</dbReference>
<dbReference type="SUPFAM" id="SSF57783">
    <property type="entry name" value="Zinc beta-ribbon"/>
    <property type="match status" value="1"/>
</dbReference>
<dbReference type="PROSITE" id="PS00782">
    <property type="entry name" value="TFIIB"/>
    <property type="match status" value="2"/>
</dbReference>
<dbReference type="PROSITE" id="PS51134">
    <property type="entry name" value="ZF_TFIIB"/>
    <property type="match status" value="1"/>
</dbReference>
<gene>
    <name evidence="2" type="primary">GTF2B</name>
</gene>
<reference key="1">
    <citation type="submission" date="2004-11" db="EMBL/GenBank/DDBJ databases">
        <authorList>
            <consortium name="The German cDNA consortium"/>
        </authorList>
    </citation>
    <scope>NUCLEOTIDE SEQUENCE [LARGE SCALE MRNA]</scope>
    <source>
        <tissue>Heart</tissue>
    </source>
</reference>